<comment type="function">
    <text evidence="1">May play a role in DNA repair. It seems to be involved in an RecBC-independent recombinational process of DNA repair. It may act with RecF and RecO.</text>
</comment>
<comment type="similarity">
    <text evidence="1">Belongs to the RecR family.</text>
</comment>
<accession>Q47HW7</accession>
<name>RECR_DECAR</name>
<sequence length="199" mass="21828">MNPSGLESLIEALRCLPGIGPKSAQRMAYHLLQRDRPGAQRLGDAVLHALQAIRHCQRCNTFTEGDICERCASPRRDPELLCVVETPVDMNMMEQTLTYRGMYYVLMGKISPLDGVGPKELGLDRLMTRALDGVVKEVILATNYTNEGEATAHYITAMLKPKGVGVTRIARGVPVGGELEYVDSGTLAQALRERKICGD</sequence>
<protein>
    <recommendedName>
        <fullName evidence="1">Recombination protein RecR</fullName>
    </recommendedName>
</protein>
<evidence type="ECO:0000255" key="1">
    <source>
        <dbReference type="HAMAP-Rule" id="MF_00017"/>
    </source>
</evidence>
<proteinExistence type="inferred from homology"/>
<reference key="1">
    <citation type="journal article" date="2009" name="BMC Genomics">
        <title>Metabolic analysis of the soil microbe Dechloromonas aromatica str. RCB: indications of a surprisingly complex life-style and cryptic anaerobic pathways for aromatic degradation.</title>
        <authorList>
            <person name="Salinero K.K."/>
            <person name="Keller K."/>
            <person name="Feil W.S."/>
            <person name="Feil H."/>
            <person name="Trong S."/>
            <person name="Di Bartolo G."/>
            <person name="Lapidus A."/>
        </authorList>
    </citation>
    <scope>NUCLEOTIDE SEQUENCE [LARGE SCALE GENOMIC DNA]</scope>
    <source>
        <strain>RCB</strain>
    </source>
</reference>
<keyword id="KW-0227">DNA damage</keyword>
<keyword id="KW-0233">DNA recombination</keyword>
<keyword id="KW-0234">DNA repair</keyword>
<keyword id="KW-0479">Metal-binding</keyword>
<keyword id="KW-0862">Zinc</keyword>
<keyword id="KW-0863">Zinc-finger</keyword>
<dbReference type="EMBL" id="CP000089">
    <property type="protein sequence ID" value="AAZ45564.1"/>
    <property type="molecule type" value="Genomic_DNA"/>
</dbReference>
<dbReference type="SMR" id="Q47HW7"/>
<dbReference type="STRING" id="159087.Daro_0808"/>
<dbReference type="KEGG" id="dar:Daro_0808"/>
<dbReference type="eggNOG" id="COG0353">
    <property type="taxonomic scope" value="Bacteria"/>
</dbReference>
<dbReference type="HOGENOM" id="CLU_060739_1_2_4"/>
<dbReference type="OrthoDB" id="9802672at2"/>
<dbReference type="GO" id="GO:0003677">
    <property type="term" value="F:DNA binding"/>
    <property type="evidence" value="ECO:0007669"/>
    <property type="project" value="UniProtKB-UniRule"/>
</dbReference>
<dbReference type="GO" id="GO:0008270">
    <property type="term" value="F:zinc ion binding"/>
    <property type="evidence" value="ECO:0007669"/>
    <property type="project" value="UniProtKB-KW"/>
</dbReference>
<dbReference type="GO" id="GO:0006310">
    <property type="term" value="P:DNA recombination"/>
    <property type="evidence" value="ECO:0007669"/>
    <property type="project" value="UniProtKB-UniRule"/>
</dbReference>
<dbReference type="GO" id="GO:0006281">
    <property type="term" value="P:DNA repair"/>
    <property type="evidence" value="ECO:0007669"/>
    <property type="project" value="UniProtKB-UniRule"/>
</dbReference>
<dbReference type="CDD" id="cd01025">
    <property type="entry name" value="TOPRIM_recR"/>
    <property type="match status" value="1"/>
</dbReference>
<dbReference type="Gene3D" id="3.40.1360.10">
    <property type="match status" value="1"/>
</dbReference>
<dbReference type="Gene3D" id="6.10.250.240">
    <property type="match status" value="1"/>
</dbReference>
<dbReference type="Gene3D" id="1.10.8.420">
    <property type="entry name" value="RecR Domain 1"/>
    <property type="match status" value="1"/>
</dbReference>
<dbReference type="HAMAP" id="MF_00017">
    <property type="entry name" value="RecR"/>
    <property type="match status" value="1"/>
</dbReference>
<dbReference type="InterPro" id="IPR000093">
    <property type="entry name" value="DNA_Rcmb_RecR"/>
</dbReference>
<dbReference type="InterPro" id="IPR023627">
    <property type="entry name" value="Rcmb_RecR"/>
</dbReference>
<dbReference type="InterPro" id="IPR015967">
    <property type="entry name" value="Rcmb_RecR_Znf"/>
</dbReference>
<dbReference type="InterPro" id="IPR006171">
    <property type="entry name" value="TOPRIM_dom"/>
</dbReference>
<dbReference type="InterPro" id="IPR034137">
    <property type="entry name" value="TOPRIM_RecR"/>
</dbReference>
<dbReference type="NCBIfam" id="TIGR00615">
    <property type="entry name" value="recR"/>
    <property type="match status" value="1"/>
</dbReference>
<dbReference type="PANTHER" id="PTHR30446">
    <property type="entry name" value="RECOMBINATION PROTEIN RECR"/>
    <property type="match status" value="1"/>
</dbReference>
<dbReference type="PANTHER" id="PTHR30446:SF0">
    <property type="entry name" value="RECOMBINATION PROTEIN RECR"/>
    <property type="match status" value="1"/>
</dbReference>
<dbReference type="Pfam" id="PF21175">
    <property type="entry name" value="RecR_C"/>
    <property type="match status" value="1"/>
</dbReference>
<dbReference type="Pfam" id="PF21176">
    <property type="entry name" value="RecR_HhH"/>
    <property type="match status" value="1"/>
</dbReference>
<dbReference type="Pfam" id="PF02132">
    <property type="entry name" value="RecR_ZnF"/>
    <property type="match status" value="1"/>
</dbReference>
<dbReference type="Pfam" id="PF13662">
    <property type="entry name" value="Toprim_4"/>
    <property type="match status" value="1"/>
</dbReference>
<dbReference type="SMART" id="SM00493">
    <property type="entry name" value="TOPRIM"/>
    <property type="match status" value="1"/>
</dbReference>
<dbReference type="SUPFAM" id="SSF111304">
    <property type="entry name" value="Recombination protein RecR"/>
    <property type="match status" value="1"/>
</dbReference>
<dbReference type="PROSITE" id="PS50880">
    <property type="entry name" value="TOPRIM"/>
    <property type="match status" value="1"/>
</dbReference>
<organism>
    <name type="scientific">Dechloromonas aromatica (strain RCB)</name>
    <dbReference type="NCBI Taxonomy" id="159087"/>
    <lineage>
        <taxon>Bacteria</taxon>
        <taxon>Pseudomonadati</taxon>
        <taxon>Pseudomonadota</taxon>
        <taxon>Betaproteobacteria</taxon>
        <taxon>Rhodocyclales</taxon>
        <taxon>Azonexaceae</taxon>
        <taxon>Dechloromonas</taxon>
    </lineage>
</organism>
<gene>
    <name evidence="1" type="primary">recR</name>
    <name type="ordered locus">Daro_0808</name>
</gene>
<feature type="chain" id="PRO_0000322883" description="Recombination protein RecR">
    <location>
        <begin position="1"/>
        <end position="199"/>
    </location>
</feature>
<feature type="domain" description="Toprim" evidence="1">
    <location>
        <begin position="79"/>
        <end position="174"/>
    </location>
</feature>
<feature type="zinc finger region" description="C4-type" evidence="1">
    <location>
        <begin position="56"/>
        <end position="71"/>
    </location>
</feature>